<sequence>MSSSSSSLLLMMLLLLLLLLTSKLEAIPVLSSTSPSPGVRILRSSESIVAPLDDEVVFECETSLPPERFEWSYSNTSSSSSAISSSFIYLSSVAGKVNISHEYAISRLAIVVRPESLGEYRCVGWFGPLVVTSTIARLDLASISLATKKESHLNWRTAPGNSIIWPCGQQVQANPLASWSFYKNGKEIQPLNHNGTLILNNISSESNGVYSCMATNTASGVRLPIPSSMELHVTKQEGSKSPYLLFGQPTRQSVTTREGQRLLLVCPGVGSPPPIPVWSSPNVTAAVPNKRSKLLSYGLEINPVQVEDAGIYICYLDNGIRPPLELYINVRVEQAPVIVQAPWAGSLTNESDRLQLECQAKGEPKPTIYWLLNGKRSHEVNQSQLLSNGRYLVLKKVLKEHAGYVQCFARNHLGEHSAGTLLQVNPKLVNETDLVVSRPQRPKKLQIMVPPSAPNVTRLSDESVMLRWHVQRNEGLPIQFFKVQYRLINEGKRKMWQTTNENIPYGKPKWNSALGKNFTASVTNLKPQRTYRFRIMAVYSNNDNKESNTSAKFFLQRGSSLEPMPVPELVKIDEYSETAVVLHWRLSDDADEQSITGYYAYYRPSSFAGEYSKATIEGAKARSFHIGSLEVGTIYEFKLQSFSADSASEFSALKQGRTQRSKLTTTEQPIQQKGGDRNVNTTPNHNETYSLNPLLTGTIGGGALLLLLLIAFSFCLCRRKNRNGGDGRNSQNKPRLAELREDFLPLAGGGVPGSKQRQRSRHIHITLNPLDQQQQQPLDEKNTNTNLNSPHLEADPELVYFQRQQQNHPTTYDYDHGQRRLSSSSLRRSQRTLERTPGSNNNLQQIGSETTTTGQRVILKRPRLSSRSENLSSGSLNSVGV</sequence>
<name>IHOG_DROWI</name>
<feature type="signal peptide" evidence="2">
    <location>
        <begin position="1"/>
        <end position="26"/>
    </location>
</feature>
<feature type="chain" id="PRO_0000383622" description="Interference hedgehog" evidence="2">
    <location>
        <begin position="27"/>
        <end position="881"/>
    </location>
</feature>
<feature type="topological domain" description="Extracellular" evidence="2">
    <location>
        <begin position="27"/>
        <end position="693"/>
    </location>
</feature>
<feature type="transmembrane region" description="Helical" evidence="2">
    <location>
        <begin position="694"/>
        <end position="714"/>
    </location>
</feature>
<feature type="topological domain" description="Cytoplasmic" evidence="2">
    <location>
        <begin position="715"/>
        <end position="881"/>
    </location>
</feature>
<feature type="domain" description="Ig-like C2-type 1" evidence="2">
    <location>
        <begin position="37"/>
        <end position="138"/>
    </location>
</feature>
<feature type="domain" description="Ig-like C2-type 2" evidence="2">
    <location>
        <begin position="128"/>
        <end position="228"/>
    </location>
</feature>
<feature type="domain" description="Ig-like C2-type 3" evidence="2">
    <location>
        <begin position="242"/>
        <end position="330"/>
    </location>
</feature>
<feature type="domain" description="Ig-like C2-type 4" evidence="2">
    <location>
        <begin position="336"/>
        <end position="425"/>
    </location>
</feature>
<feature type="domain" description="Fibronectin type-III 1" evidence="4">
    <location>
        <begin position="450"/>
        <end position="558"/>
    </location>
</feature>
<feature type="domain" description="Fibronectin type-III 2" evidence="4">
    <location>
        <begin position="566"/>
        <end position="661"/>
    </location>
</feature>
<feature type="region of interest" description="Disordered" evidence="5">
    <location>
        <begin position="655"/>
        <end position="685"/>
    </location>
</feature>
<feature type="region of interest" description="Disordered" evidence="5">
    <location>
        <begin position="768"/>
        <end position="791"/>
    </location>
</feature>
<feature type="region of interest" description="Disordered" evidence="5">
    <location>
        <begin position="809"/>
        <end position="881"/>
    </location>
</feature>
<feature type="compositionally biased region" description="Polar residues" evidence="5">
    <location>
        <begin position="656"/>
        <end position="671"/>
    </location>
</feature>
<feature type="compositionally biased region" description="Polar residues" evidence="5">
    <location>
        <begin position="837"/>
        <end position="855"/>
    </location>
</feature>
<feature type="compositionally biased region" description="Low complexity" evidence="5">
    <location>
        <begin position="865"/>
        <end position="881"/>
    </location>
</feature>
<feature type="binding site" evidence="1">
    <location>
        <position position="486"/>
    </location>
    <ligand>
        <name>heparin</name>
        <dbReference type="ChEBI" id="CHEBI:28304"/>
    </ligand>
</feature>
<feature type="binding site" evidence="1">
    <location>
        <position position="492"/>
    </location>
    <ligand>
        <name>heparin</name>
        <dbReference type="ChEBI" id="CHEBI:28304"/>
    </ligand>
</feature>
<feature type="binding site" evidence="1">
    <location>
        <position position="494"/>
    </location>
    <ligand>
        <name>heparin</name>
        <dbReference type="ChEBI" id="CHEBI:28304"/>
    </ligand>
</feature>
<feature type="binding site" evidence="1">
    <location>
        <position position="532"/>
    </location>
    <ligand>
        <name>heparin</name>
        <dbReference type="ChEBI" id="CHEBI:28304"/>
    </ligand>
</feature>
<feature type="glycosylation site" description="N-linked (GlcNAc...) asparagine" evidence="2">
    <location>
        <position position="75"/>
    </location>
</feature>
<feature type="glycosylation site" description="N-linked (GlcNAc...) asparagine" evidence="2">
    <location>
        <position position="98"/>
    </location>
</feature>
<feature type="glycosylation site" description="N-linked (GlcNAc...) asparagine" evidence="2">
    <location>
        <position position="194"/>
    </location>
</feature>
<feature type="glycosylation site" description="N-linked (GlcNAc...) asparagine" evidence="2">
    <location>
        <position position="201"/>
    </location>
</feature>
<feature type="glycosylation site" description="N-linked (GlcNAc...) asparagine" evidence="2">
    <location>
        <position position="282"/>
    </location>
</feature>
<feature type="glycosylation site" description="N-linked (GlcNAc...) asparagine" evidence="2">
    <location>
        <position position="349"/>
    </location>
</feature>
<feature type="glycosylation site" description="N-linked (GlcNAc...) asparagine" evidence="2">
    <location>
        <position position="381"/>
    </location>
</feature>
<feature type="glycosylation site" description="N-linked (GlcNAc...) asparagine" evidence="2">
    <location>
        <position position="430"/>
    </location>
</feature>
<feature type="glycosylation site" description="N-linked (GlcNAc...) asparagine" evidence="2">
    <location>
        <position position="455"/>
    </location>
</feature>
<feature type="glycosylation site" description="N-linked (GlcNAc...) asparagine" evidence="2">
    <location>
        <position position="517"/>
    </location>
</feature>
<feature type="glycosylation site" description="N-linked (GlcNAc...) asparagine" evidence="2">
    <location>
        <position position="548"/>
    </location>
</feature>
<feature type="glycosylation site" description="N-linked (GlcNAc...) asparagine" evidence="2">
    <location>
        <position position="686"/>
    </location>
</feature>
<feature type="disulfide bond" evidence="3">
    <location>
        <begin position="60"/>
        <end position="122"/>
    </location>
</feature>
<feature type="disulfide bond" evidence="3">
    <location>
        <begin position="167"/>
        <end position="212"/>
    </location>
</feature>
<feature type="disulfide bond" evidence="3">
    <location>
        <begin position="266"/>
        <end position="314"/>
    </location>
</feature>
<feature type="disulfide bond" evidence="3">
    <location>
        <begin position="358"/>
        <end position="407"/>
    </location>
</feature>
<evidence type="ECO:0000250" key="1">
    <source>
        <dbReference type="UniProtKB" id="Q9VM64"/>
    </source>
</evidence>
<evidence type="ECO:0000255" key="2"/>
<evidence type="ECO:0000255" key="3">
    <source>
        <dbReference type="PROSITE-ProRule" id="PRU00114"/>
    </source>
</evidence>
<evidence type="ECO:0000255" key="4">
    <source>
        <dbReference type="PROSITE-ProRule" id="PRU00316"/>
    </source>
</evidence>
<evidence type="ECO:0000256" key="5">
    <source>
        <dbReference type="SAM" id="MobiDB-lite"/>
    </source>
</evidence>
<evidence type="ECO:0000305" key="6"/>
<evidence type="ECO:0000312" key="7">
    <source>
        <dbReference type="EMBL" id="EDW78007.1"/>
    </source>
</evidence>
<proteinExistence type="inferred from homology"/>
<protein>
    <recommendedName>
        <fullName evidence="1">Interference hedgehog</fullName>
    </recommendedName>
</protein>
<dbReference type="EMBL" id="CH963920">
    <property type="protein sequence ID" value="EDW78007.1"/>
    <property type="molecule type" value="Genomic_DNA"/>
</dbReference>
<dbReference type="RefSeq" id="XP_002067021.2">
    <property type="nucleotide sequence ID" value="XM_002066985.2"/>
</dbReference>
<dbReference type="SMR" id="B4N072"/>
<dbReference type="STRING" id="7260.B4N072"/>
<dbReference type="GlyCosmos" id="B4N072">
    <property type="glycosylation" value="12 sites, No reported glycans"/>
</dbReference>
<dbReference type="EnsemblMetazoa" id="FBtr0254897">
    <property type="protein sequence ID" value="FBpp0253389"/>
    <property type="gene ID" value="FBgn0226207"/>
</dbReference>
<dbReference type="EnsemblMetazoa" id="XM_002066985.4">
    <property type="protein sequence ID" value="XP_002067021.3"/>
    <property type="gene ID" value="LOC6644407"/>
</dbReference>
<dbReference type="GeneID" id="6644407"/>
<dbReference type="KEGG" id="dwi:6644407"/>
<dbReference type="eggNOG" id="ENOG502QSGM">
    <property type="taxonomic scope" value="Eukaryota"/>
</dbReference>
<dbReference type="HOGENOM" id="CLU_004633_1_0_1"/>
<dbReference type="OMA" id="CGLMEGK"/>
<dbReference type="OrthoDB" id="9998697at2759"/>
<dbReference type="PhylomeDB" id="B4N072"/>
<dbReference type="Proteomes" id="UP000007798">
    <property type="component" value="Unassembled WGS sequence"/>
</dbReference>
<dbReference type="GO" id="GO:0030424">
    <property type="term" value="C:axon"/>
    <property type="evidence" value="ECO:0007669"/>
    <property type="project" value="TreeGrafter"/>
</dbReference>
<dbReference type="GO" id="GO:0009986">
    <property type="term" value="C:cell surface"/>
    <property type="evidence" value="ECO:0007669"/>
    <property type="project" value="EnsemblMetazoa"/>
</dbReference>
<dbReference type="GO" id="GO:0035230">
    <property type="term" value="C:cytoneme"/>
    <property type="evidence" value="ECO:0007669"/>
    <property type="project" value="EnsemblMetazoa"/>
</dbReference>
<dbReference type="GO" id="GO:0016020">
    <property type="term" value="C:membrane"/>
    <property type="evidence" value="ECO:0000250"/>
    <property type="project" value="UniProtKB"/>
</dbReference>
<dbReference type="GO" id="GO:0005886">
    <property type="term" value="C:plasma membrane"/>
    <property type="evidence" value="ECO:0007669"/>
    <property type="project" value="EnsemblMetazoa"/>
</dbReference>
<dbReference type="GO" id="GO:0015026">
    <property type="term" value="F:coreceptor activity"/>
    <property type="evidence" value="ECO:0007669"/>
    <property type="project" value="EnsemblMetazoa"/>
</dbReference>
<dbReference type="GO" id="GO:0097108">
    <property type="term" value="F:hedgehog family protein binding"/>
    <property type="evidence" value="ECO:0007669"/>
    <property type="project" value="EnsemblMetazoa"/>
</dbReference>
<dbReference type="GO" id="GO:0008201">
    <property type="term" value="F:heparin binding"/>
    <property type="evidence" value="ECO:0000250"/>
    <property type="project" value="UniProtKB"/>
</dbReference>
<dbReference type="GO" id="GO:0005113">
    <property type="term" value="F:patched binding"/>
    <property type="evidence" value="ECO:0007669"/>
    <property type="project" value="EnsemblMetazoa"/>
</dbReference>
<dbReference type="GO" id="GO:0042803">
    <property type="term" value="F:protein homodimerization activity"/>
    <property type="evidence" value="ECO:0000250"/>
    <property type="project" value="UniProtKB"/>
</dbReference>
<dbReference type="GO" id="GO:0007411">
    <property type="term" value="P:axon guidance"/>
    <property type="evidence" value="ECO:0007669"/>
    <property type="project" value="TreeGrafter"/>
</dbReference>
<dbReference type="GO" id="GO:0048749">
    <property type="term" value="P:compound eye development"/>
    <property type="evidence" value="ECO:0007669"/>
    <property type="project" value="EnsemblMetazoa"/>
</dbReference>
<dbReference type="GO" id="GO:0035017">
    <property type="term" value="P:cuticle pattern formation"/>
    <property type="evidence" value="ECO:0007669"/>
    <property type="project" value="EnsemblMetazoa"/>
</dbReference>
<dbReference type="GO" id="GO:0034109">
    <property type="term" value="P:homotypic cell-cell adhesion"/>
    <property type="evidence" value="ECO:0007669"/>
    <property type="project" value="EnsemblMetazoa"/>
</dbReference>
<dbReference type="GO" id="GO:0071694">
    <property type="term" value="P:maintenance of protein location in extracellular region"/>
    <property type="evidence" value="ECO:0007669"/>
    <property type="project" value="EnsemblMetazoa"/>
</dbReference>
<dbReference type="GO" id="GO:0007379">
    <property type="term" value="P:segment specification"/>
    <property type="evidence" value="ECO:0007669"/>
    <property type="project" value="EnsemblMetazoa"/>
</dbReference>
<dbReference type="GO" id="GO:0007224">
    <property type="term" value="P:smoothened signaling pathway"/>
    <property type="evidence" value="ECO:0000250"/>
    <property type="project" value="UniProtKB"/>
</dbReference>
<dbReference type="GO" id="GO:0048100">
    <property type="term" value="P:wing disc anterior/posterior pattern formation"/>
    <property type="evidence" value="ECO:0007669"/>
    <property type="project" value="EnsemblMetazoa"/>
</dbReference>
<dbReference type="CDD" id="cd00063">
    <property type="entry name" value="FN3"/>
    <property type="match status" value="2"/>
</dbReference>
<dbReference type="CDD" id="cd00096">
    <property type="entry name" value="Ig"/>
    <property type="match status" value="1"/>
</dbReference>
<dbReference type="FunFam" id="2.60.40.10:FF:001723">
    <property type="entry name" value="Interference hedgehog"/>
    <property type="match status" value="1"/>
</dbReference>
<dbReference type="FunFam" id="2.60.40.10:FF:001747">
    <property type="entry name" value="Interference hedgehog"/>
    <property type="match status" value="1"/>
</dbReference>
<dbReference type="FunFam" id="2.60.40.10:FF:001773">
    <property type="entry name" value="Interference hedgehog"/>
    <property type="match status" value="1"/>
</dbReference>
<dbReference type="FunFam" id="2.60.40.10:FF:002071">
    <property type="entry name" value="Interference hedgehog"/>
    <property type="match status" value="1"/>
</dbReference>
<dbReference type="FunFam" id="2.60.40.10:FF:002212">
    <property type="entry name" value="Interference hedgehog"/>
    <property type="match status" value="1"/>
</dbReference>
<dbReference type="Gene3D" id="2.60.40.10">
    <property type="entry name" value="Immunoglobulins"/>
    <property type="match status" value="5"/>
</dbReference>
<dbReference type="InterPro" id="IPR003961">
    <property type="entry name" value="FN3_dom"/>
</dbReference>
<dbReference type="InterPro" id="IPR036116">
    <property type="entry name" value="FN3_sf"/>
</dbReference>
<dbReference type="InterPro" id="IPR007110">
    <property type="entry name" value="Ig-like_dom"/>
</dbReference>
<dbReference type="InterPro" id="IPR036179">
    <property type="entry name" value="Ig-like_dom_sf"/>
</dbReference>
<dbReference type="InterPro" id="IPR013783">
    <property type="entry name" value="Ig-like_fold"/>
</dbReference>
<dbReference type="InterPro" id="IPR003599">
    <property type="entry name" value="Ig_sub"/>
</dbReference>
<dbReference type="InterPro" id="IPR003598">
    <property type="entry name" value="Ig_sub2"/>
</dbReference>
<dbReference type="InterPro" id="IPR013151">
    <property type="entry name" value="Immunoglobulin_dom"/>
</dbReference>
<dbReference type="PANTHER" id="PTHR44170:SF33">
    <property type="entry name" value="BROTHER OF IHOG, ISOFORM G-RELATED"/>
    <property type="match status" value="1"/>
</dbReference>
<dbReference type="PANTHER" id="PTHR44170">
    <property type="entry name" value="PROTEIN SIDEKICK"/>
    <property type="match status" value="1"/>
</dbReference>
<dbReference type="Pfam" id="PF00041">
    <property type="entry name" value="fn3"/>
    <property type="match status" value="2"/>
</dbReference>
<dbReference type="Pfam" id="PF00047">
    <property type="entry name" value="ig"/>
    <property type="match status" value="1"/>
</dbReference>
<dbReference type="Pfam" id="PF13895">
    <property type="entry name" value="Ig_2"/>
    <property type="match status" value="1"/>
</dbReference>
<dbReference type="Pfam" id="PF13927">
    <property type="entry name" value="Ig_3"/>
    <property type="match status" value="1"/>
</dbReference>
<dbReference type="SMART" id="SM00060">
    <property type="entry name" value="FN3"/>
    <property type="match status" value="2"/>
</dbReference>
<dbReference type="SMART" id="SM00409">
    <property type="entry name" value="IG"/>
    <property type="match status" value="4"/>
</dbReference>
<dbReference type="SMART" id="SM00408">
    <property type="entry name" value="IGc2"/>
    <property type="match status" value="3"/>
</dbReference>
<dbReference type="SUPFAM" id="SSF49265">
    <property type="entry name" value="Fibronectin type III"/>
    <property type="match status" value="1"/>
</dbReference>
<dbReference type="SUPFAM" id="SSF48726">
    <property type="entry name" value="Immunoglobulin"/>
    <property type="match status" value="3"/>
</dbReference>
<dbReference type="PROSITE" id="PS50853">
    <property type="entry name" value="FN3"/>
    <property type="match status" value="2"/>
</dbReference>
<dbReference type="PROSITE" id="PS50835">
    <property type="entry name" value="IG_LIKE"/>
    <property type="match status" value="4"/>
</dbReference>
<comment type="function">
    <text evidence="1">Mediates response to the active Hedgehog (Hh) protein signal in embryos, functioning upstream or at the level of patched (ptc).</text>
</comment>
<comment type="subunit">
    <text evidence="1">Homodimer. Heterotetramer; 2 iHog chains bind 2 hh chains when facilitated by heparin, heparin is required to promote high-affinity interactions between hh and iHog (By similarity).</text>
</comment>
<comment type="subcellular location">
    <subcellularLocation>
        <location evidence="2">Membrane</location>
        <topology evidence="1 2">Single-pass type I membrane protein</topology>
    </subcellularLocation>
</comment>
<comment type="domain">
    <text evidence="1">The first fibronectin type-III domain mediates a specific interaction with Hh protein, in vitro. The second fibronectin type-III domain is additionally required for in vivo signaling activity (By similarity).</text>
</comment>
<comment type="similarity">
    <text evidence="2 6">Belongs to the immunoglobulin superfamily. IHOG family.</text>
</comment>
<accession>B4N072</accession>
<reference evidence="7" key="1">
    <citation type="journal article" date="2007" name="Nature">
        <title>Evolution of genes and genomes on the Drosophila phylogeny.</title>
        <authorList>
            <consortium name="Drosophila 12 genomes consortium"/>
        </authorList>
    </citation>
    <scope>NUCLEOTIDE SEQUENCE [LARGE SCALE GENOMIC DNA]</scope>
    <source>
        <strain evidence="7">Tucson 14030-0811.24</strain>
    </source>
</reference>
<keyword id="KW-1015">Disulfide bond</keyword>
<keyword id="KW-0325">Glycoprotein</keyword>
<keyword id="KW-0358">Heparin-binding</keyword>
<keyword id="KW-0393">Immunoglobulin domain</keyword>
<keyword id="KW-0472">Membrane</keyword>
<keyword id="KW-0654">Proteoglycan</keyword>
<keyword id="KW-1185">Reference proteome</keyword>
<keyword id="KW-0677">Repeat</keyword>
<keyword id="KW-0732">Signal</keyword>
<keyword id="KW-0812">Transmembrane</keyword>
<keyword id="KW-1133">Transmembrane helix</keyword>
<organism>
    <name type="scientific">Drosophila willistoni</name>
    <name type="common">Fruit fly</name>
    <dbReference type="NCBI Taxonomy" id="7260"/>
    <lineage>
        <taxon>Eukaryota</taxon>
        <taxon>Metazoa</taxon>
        <taxon>Ecdysozoa</taxon>
        <taxon>Arthropoda</taxon>
        <taxon>Hexapoda</taxon>
        <taxon>Insecta</taxon>
        <taxon>Pterygota</taxon>
        <taxon>Neoptera</taxon>
        <taxon>Endopterygota</taxon>
        <taxon>Diptera</taxon>
        <taxon>Brachycera</taxon>
        <taxon>Muscomorpha</taxon>
        <taxon>Ephydroidea</taxon>
        <taxon>Drosophilidae</taxon>
        <taxon>Drosophila</taxon>
        <taxon>Sophophora</taxon>
    </lineage>
</organism>
<gene>
    <name evidence="1" type="primary">iHog</name>
    <name type="ORF">GK24246</name>
</gene>